<comment type="function">
    <text evidence="1">ATP-dependent specificity component of the Clp protease. It directs the protease to specific substrates. Can perform chaperone functions in the absence of ClpP.</text>
</comment>
<comment type="subunit">
    <text evidence="1">Component of the ClpX-ClpP complex. Forms a hexameric ring that, in the presence of ATP, binds to fourteen ClpP subunits assembled into a disk-like structure with a central cavity, resembling the structure of eukaryotic proteasomes.</text>
</comment>
<comment type="similarity">
    <text evidence="1">Belongs to the ClpX chaperone family.</text>
</comment>
<sequence length="421" mass="46259">MTKSTSGDSKNTLYCSFCGKSQHEVRKLIAGPTVFICDECVELCMDIIREEHKTHLVRSRDGVPTPKDICQVLDDYVIGQSHAKKVLSVAVHNHYKRLQHGGKNNEVELAKSNILLIGPTGCGKTLLAQTLARILDVPFTMADATTLTEAGYVGEDVENIILKLLQAAEYNVERAQRGIVYIDEVDKISRKSDNPSITRDVSGEGVQQALLKIMEGTVASVPPQGGRKHPQQEFLQVDTTNILFICGGAFAGLEKIIGSRGRGTSIGFGADVRGPDERRTGEILREVEPEDLLKFGLIPEFVGRLPVLATLEDLDVDALIDILSKPKNALVKQYQRLFEMEDTRLAFSDDALKAIAEKAIARKTGARGLRSIMETILLDTMFDLPGLDAVDEVVINKEVVEGRAKPLYIYAERREDVGSSA</sequence>
<protein>
    <recommendedName>
        <fullName evidence="1">ATP-dependent Clp protease ATP-binding subunit ClpX</fullName>
    </recommendedName>
</protein>
<keyword id="KW-0067">ATP-binding</keyword>
<keyword id="KW-0143">Chaperone</keyword>
<keyword id="KW-0479">Metal-binding</keyword>
<keyword id="KW-0547">Nucleotide-binding</keyword>
<keyword id="KW-0862">Zinc</keyword>
<evidence type="ECO:0000255" key="1">
    <source>
        <dbReference type="HAMAP-Rule" id="MF_00175"/>
    </source>
</evidence>
<evidence type="ECO:0000255" key="2">
    <source>
        <dbReference type="PROSITE-ProRule" id="PRU01250"/>
    </source>
</evidence>
<dbReference type="EMBL" id="AP007255">
    <property type="protein sequence ID" value="BAE51595.1"/>
    <property type="molecule type" value="Genomic_DNA"/>
</dbReference>
<dbReference type="RefSeq" id="WP_011385169.1">
    <property type="nucleotide sequence ID" value="NC_007626.1"/>
</dbReference>
<dbReference type="SMR" id="Q2W3I0"/>
<dbReference type="STRING" id="342108.amb2791"/>
<dbReference type="KEGG" id="mag:amb2791"/>
<dbReference type="HOGENOM" id="CLU_014218_8_2_5"/>
<dbReference type="OrthoDB" id="9804062at2"/>
<dbReference type="Proteomes" id="UP000007058">
    <property type="component" value="Chromosome"/>
</dbReference>
<dbReference type="GO" id="GO:0009376">
    <property type="term" value="C:HslUV protease complex"/>
    <property type="evidence" value="ECO:0007669"/>
    <property type="project" value="TreeGrafter"/>
</dbReference>
<dbReference type="GO" id="GO:0005524">
    <property type="term" value="F:ATP binding"/>
    <property type="evidence" value="ECO:0007669"/>
    <property type="project" value="UniProtKB-UniRule"/>
</dbReference>
<dbReference type="GO" id="GO:0016887">
    <property type="term" value="F:ATP hydrolysis activity"/>
    <property type="evidence" value="ECO:0007669"/>
    <property type="project" value="InterPro"/>
</dbReference>
<dbReference type="GO" id="GO:0140662">
    <property type="term" value="F:ATP-dependent protein folding chaperone"/>
    <property type="evidence" value="ECO:0007669"/>
    <property type="project" value="InterPro"/>
</dbReference>
<dbReference type="GO" id="GO:0046983">
    <property type="term" value="F:protein dimerization activity"/>
    <property type="evidence" value="ECO:0007669"/>
    <property type="project" value="InterPro"/>
</dbReference>
<dbReference type="GO" id="GO:0051082">
    <property type="term" value="F:unfolded protein binding"/>
    <property type="evidence" value="ECO:0007669"/>
    <property type="project" value="UniProtKB-UniRule"/>
</dbReference>
<dbReference type="GO" id="GO:0008270">
    <property type="term" value="F:zinc ion binding"/>
    <property type="evidence" value="ECO:0007669"/>
    <property type="project" value="InterPro"/>
</dbReference>
<dbReference type="GO" id="GO:0051301">
    <property type="term" value="P:cell division"/>
    <property type="evidence" value="ECO:0007669"/>
    <property type="project" value="TreeGrafter"/>
</dbReference>
<dbReference type="GO" id="GO:0051603">
    <property type="term" value="P:proteolysis involved in protein catabolic process"/>
    <property type="evidence" value="ECO:0007669"/>
    <property type="project" value="TreeGrafter"/>
</dbReference>
<dbReference type="CDD" id="cd19497">
    <property type="entry name" value="RecA-like_ClpX"/>
    <property type="match status" value="1"/>
</dbReference>
<dbReference type="FunFam" id="1.10.8.60:FF:000002">
    <property type="entry name" value="ATP-dependent Clp protease ATP-binding subunit ClpX"/>
    <property type="match status" value="1"/>
</dbReference>
<dbReference type="FunFam" id="3.40.50.300:FF:000005">
    <property type="entry name" value="ATP-dependent Clp protease ATP-binding subunit ClpX"/>
    <property type="match status" value="1"/>
</dbReference>
<dbReference type="Gene3D" id="1.10.8.60">
    <property type="match status" value="1"/>
</dbReference>
<dbReference type="Gene3D" id="6.20.220.10">
    <property type="entry name" value="ClpX chaperone, C4-type zinc finger domain"/>
    <property type="match status" value="1"/>
</dbReference>
<dbReference type="Gene3D" id="3.40.50.300">
    <property type="entry name" value="P-loop containing nucleotide triphosphate hydrolases"/>
    <property type="match status" value="1"/>
</dbReference>
<dbReference type="HAMAP" id="MF_00175">
    <property type="entry name" value="ClpX"/>
    <property type="match status" value="1"/>
</dbReference>
<dbReference type="InterPro" id="IPR003593">
    <property type="entry name" value="AAA+_ATPase"/>
</dbReference>
<dbReference type="InterPro" id="IPR050052">
    <property type="entry name" value="ATP-dep_Clp_protease_ClpX"/>
</dbReference>
<dbReference type="InterPro" id="IPR003959">
    <property type="entry name" value="ATPase_AAA_core"/>
</dbReference>
<dbReference type="InterPro" id="IPR019489">
    <property type="entry name" value="Clp_ATPase_C"/>
</dbReference>
<dbReference type="InterPro" id="IPR004487">
    <property type="entry name" value="Clp_protease_ATP-bd_su_ClpX"/>
</dbReference>
<dbReference type="InterPro" id="IPR046425">
    <property type="entry name" value="ClpX_bact"/>
</dbReference>
<dbReference type="InterPro" id="IPR027417">
    <property type="entry name" value="P-loop_NTPase"/>
</dbReference>
<dbReference type="InterPro" id="IPR010603">
    <property type="entry name" value="Znf_CppX_C4"/>
</dbReference>
<dbReference type="InterPro" id="IPR038366">
    <property type="entry name" value="Znf_CppX_C4_sf"/>
</dbReference>
<dbReference type="NCBIfam" id="TIGR00382">
    <property type="entry name" value="clpX"/>
    <property type="match status" value="1"/>
</dbReference>
<dbReference type="NCBIfam" id="NF003745">
    <property type="entry name" value="PRK05342.1"/>
    <property type="match status" value="1"/>
</dbReference>
<dbReference type="PANTHER" id="PTHR48102:SF7">
    <property type="entry name" value="ATP-DEPENDENT CLP PROTEASE ATP-BINDING SUBUNIT CLPX-LIKE, MITOCHONDRIAL"/>
    <property type="match status" value="1"/>
</dbReference>
<dbReference type="PANTHER" id="PTHR48102">
    <property type="entry name" value="ATP-DEPENDENT CLP PROTEASE ATP-BINDING SUBUNIT CLPX-LIKE, MITOCHONDRIAL-RELATED"/>
    <property type="match status" value="1"/>
</dbReference>
<dbReference type="Pfam" id="PF07724">
    <property type="entry name" value="AAA_2"/>
    <property type="match status" value="1"/>
</dbReference>
<dbReference type="Pfam" id="PF10431">
    <property type="entry name" value="ClpB_D2-small"/>
    <property type="match status" value="1"/>
</dbReference>
<dbReference type="Pfam" id="PF06689">
    <property type="entry name" value="zf-C4_ClpX"/>
    <property type="match status" value="1"/>
</dbReference>
<dbReference type="SMART" id="SM00382">
    <property type="entry name" value="AAA"/>
    <property type="match status" value="1"/>
</dbReference>
<dbReference type="SMART" id="SM01086">
    <property type="entry name" value="ClpB_D2-small"/>
    <property type="match status" value="1"/>
</dbReference>
<dbReference type="SMART" id="SM00994">
    <property type="entry name" value="zf-C4_ClpX"/>
    <property type="match status" value="1"/>
</dbReference>
<dbReference type="SUPFAM" id="SSF57716">
    <property type="entry name" value="Glucocorticoid receptor-like (DNA-binding domain)"/>
    <property type="match status" value="1"/>
</dbReference>
<dbReference type="SUPFAM" id="SSF52540">
    <property type="entry name" value="P-loop containing nucleoside triphosphate hydrolases"/>
    <property type="match status" value="1"/>
</dbReference>
<dbReference type="PROSITE" id="PS51902">
    <property type="entry name" value="CLPX_ZB"/>
    <property type="match status" value="1"/>
</dbReference>
<feature type="chain" id="PRO_1000024579" description="ATP-dependent Clp protease ATP-binding subunit ClpX">
    <location>
        <begin position="1"/>
        <end position="421"/>
    </location>
</feature>
<feature type="domain" description="ClpX-type ZB" evidence="2">
    <location>
        <begin position="3"/>
        <end position="56"/>
    </location>
</feature>
<feature type="binding site" evidence="2">
    <location>
        <position position="15"/>
    </location>
    <ligand>
        <name>Zn(2+)</name>
        <dbReference type="ChEBI" id="CHEBI:29105"/>
    </ligand>
</feature>
<feature type="binding site" evidence="2">
    <location>
        <position position="18"/>
    </location>
    <ligand>
        <name>Zn(2+)</name>
        <dbReference type="ChEBI" id="CHEBI:29105"/>
    </ligand>
</feature>
<feature type="binding site" evidence="2">
    <location>
        <position position="37"/>
    </location>
    <ligand>
        <name>Zn(2+)</name>
        <dbReference type="ChEBI" id="CHEBI:29105"/>
    </ligand>
</feature>
<feature type="binding site" evidence="2">
    <location>
        <position position="40"/>
    </location>
    <ligand>
        <name>Zn(2+)</name>
        <dbReference type="ChEBI" id="CHEBI:29105"/>
    </ligand>
</feature>
<feature type="binding site" evidence="1">
    <location>
        <begin position="119"/>
        <end position="126"/>
    </location>
    <ligand>
        <name>ATP</name>
        <dbReference type="ChEBI" id="CHEBI:30616"/>
    </ligand>
</feature>
<name>CLPX_PARM1</name>
<reference key="1">
    <citation type="journal article" date="2005" name="DNA Res.">
        <title>Complete genome sequence of the facultative anaerobic magnetotactic bacterium Magnetospirillum sp. strain AMB-1.</title>
        <authorList>
            <person name="Matsunaga T."/>
            <person name="Okamura Y."/>
            <person name="Fukuda Y."/>
            <person name="Wahyudi A.T."/>
            <person name="Murase Y."/>
            <person name="Takeyama H."/>
        </authorList>
    </citation>
    <scope>NUCLEOTIDE SEQUENCE [LARGE SCALE GENOMIC DNA]</scope>
    <source>
        <strain>ATCC 700264 / AMB-1</strain>
    </source>
</reference>
<gene>
    <name evidence="1" type="primary">clpX</name>
    <name type="ordered locus">amb2791</name>
</gene>
<accession>Q2W3I0</accession>
<proteinExistence type="inferred from homology"/>
<organism>
    <name type="scientific">Paramagnetospirillum magneticum (strain ATCC 700264 / AMB-1)</name>
    <name type="common">Magnetospirillum magneticum</name>
    <dbReference type="NCBI Taxonomy" id="342108"/>
    <lineage>
        <taxon>Bacteria</taxon>
        <taxon>Pseudomonadati</taxon>
        <taxon>Pseudomonadota</taxon>
        <taxon>Alphaproteobacteria</taxon>
        <taxon>Rhodospirillales</taxon>
        <taxon>Magnetospirillaceae</taxon>
        <taxon>Paramagnetospirillum</taxon>
    </lineage>
</organism>